<gene>
    <name evidence="1" type="primary">hemA</name>
    <name type="ordered locus">NP_4502A</name>
</gene>
<name>HEM1_NATPD</name>
<protein>
    <recommendedName>
        <fullName evidence="1">Glutamyl-tRNA reductase</fullName>
        <shortName evidence="1">GluTR</shortName>
        <ecNumber evidence="1">1.2.1.70</ecNumber>
    </recommendedName>
</protein>
<evidence type="ECO:0000255" key="1">
    <source>
        <dbReference type="HAMAP-Rule" id="MF_00087"/>
    </source>
</evidence>
<evidence type="ECO:0000256" key="2">
    <source>
        <dbReference type="SAM" id="MobiDB-lite"/>
    </source>
</evidence>
<organism>
    <name type="scientific">Natronomonas pharaonis (strain ATCC 35678 / DSM 2160 / CIP 103997 / JCM 8858 / NBRC 14720 / NCIMB 2260 / Gabara)</name>
    <name type="common">Halobacterium pharaonis</name>
    <dbReference type="NCBI Taxonomy" id="348780"/>
    <lineage>
        <taxon>Archaea</taxon>
        <taxon>Methanobacteriati</taxon>
        <taxon>Methanobacteriota</taxon>
        <taxon>Stenosarchaea group</taxon>
        <taxon>Halobacteria</taxon>
        <taxon>Halobacteriales</taxon>
        <taxon>Haloarculaceae</taxon>
        <taxon>Natronomonas</taxon>
    </lineage>
</organism>
<accession>Q3ING1</accession>
<keyword id="KW-0521">NADP</keyword>
<keyword id="KW-0560">Oxidoreductase</keyword>
<keyword id="KW-0627">Porphyrin biosynthesis</keyword>
<keyword id="KW-1185">Reference proteome</keyword>
<comment type="function">
    <text evidence="1">Catalyzes the NADPH-dependent reduction of glutamyl-tRNA(Glu) to glutamate 1-semialdehyde (GSA).</text>
</comment>
<comment type="catalytic activity">
    <reaction evidence="1">
        <text>(S)-4-amino-5-oxopentanoate + tRNA(Glu) + NADP(+) = L-glutamyl-tRNA(Glu) + NADPH + H(+)</text>
        <dbReference type="Rhea" id="RHEA:12344"/>
        <dbReference type="Rhea" id="RHEA-COMP:9663"/>
        <dbReference type="Rhea" id="RHEA-COMP:9680"/>
        <dbReference type="ChEBI" id="CHEBI:15378"/>
        <dbReference type="ChEBI" id="CHEBI:57501"/>
        <dbReference type="ChEBI" id="CHEBI:57783"/>
        <dbReference type="ChEBI" id="CHEBI:58349"/>
        <dbReference type="ChEBI" id="CHEBI:78442"/>
        <dbReference type="ChEBI" id="CHEBI:78520"/>
        <dbReference type="EC" id="1.2.1.70"/>
    </reaction>
</comment>
<comment type="pathway">
    <text evidence="1">Porphyrin-containing compound metabolism; protoporphyrin-IX biosynthesis; 5-aminolevulinate from L-glutamyl-tRNA(Glu): step 1/2.</text>
</comment>
<comment type="subunit">
    <text evidence="1">Homodimer.</text>
</comment>
<comment type="domain">
    <text evidence="1">Possesses an unusual extended V-shaped dimeric structure with each monomer consisting of three distinct domains arranged along a curved 'spinal' alpha-helix. The N-terminal catalytic domain specifically recognizes the glutamate moiety of the substrate. The second domain is the NADPH-binding domain, and the third C-terminal domain is responsible for dimerization.</text>
</comment>
<comment type="miscellaneous">
    <text evidence="1">During catalysis, the active site Cys acts as a nucleophile attacking the alpha-carbonyl group of tRNA-bound glutamate with the formation of a thioester intermediate between enzyme and glutamate, and the concomitant release of tRNA(Glu). The thioester intermediate is finally reduced by direct hydride transfer from NADPH, to form the product GSA.</text>
</comment>
<comment type="similarity">
    <text evidence="1">Belongs to the glutamyl-tRNA reductase family.</text>
</comment>
<feature type="chain" id="PRO_1000004654" description="Glutamyl-tRNA reductase">
    <location>
        <begin position="1"/>
        <end position="453"/>
    </location>
</feature>
<feature type="region of interest" description="Disordered" evidence="2">
    <location>
        <begin position="413"/>
        <end position="453"/>
    </location>
</feature>
<feature type="compositionally biased region" description="Low complexity" evidence="2">
    <location>
        <begin position="413"/>
        <end position="424"/>
    </location>
</feature>
<feature type="active site" description="Nucleophile" evidence="1">
    <location>
        <position position="53"/>
    </location>
</feature>
<feature type="binding site" evidence="1">
    <location>
        <begin position="52"/>
        <end position="55"/>
    </location>
    <ligand>
        <name>substrate</name>
    </ligand>
</feature>
<feature type="binding site" evidence="1">
    <location>
        <position position="105"/>
    </location>
    <ligand>
        <name>substrate</name>
    </ligand>
</feature>
<feature type="binding site" evidence="1">
    <location>
        <begin position="110"/>
        <end position="112"/>
    </location>
    <ligand>
        <name>substrate</name>
    </ligand>
</feature>
<feature type="binding site" evidence="1">
    <location>
        <position position="116"/>
    </location>
    <ligand>
        <name>substrate</name>
    </ligand>
</feature>
<feature type="binding site" evidence="1">
    <location>
        <begin position="184"/>
        <end position="189"/>
    </location>
    <ligand>
        <name>NADP(+)</name>
        <dbReference type="ChEBI" id="CHEBI:58349"/>
    </ligand>
</feature>
<feature type="site" description="Important for activity" evidence="1">
    <location>
        <position position="95"/>
    </location>
</feature>
<reference key="1">
    <citation type="journal article" date="2005" name="Genome Res.">
        <title>Living with two extremes: conclusions from the genome sequence of Natronomonas pharaonis.</title>
        <authorList>
            <person name="Falb M."/>
            <person name="Pfeiffer F."/>
            <person name="Palm P."/>
            <person name="Rodewald K."/>
            <person name="Hickmann V."/>
            <person name="Tittor J."/>
            <person name="Oesterhelt D."/>
        </authorList>
    </citation>
    <scope>NUCLEOTIDE SEQUENCE [LARGE SCALE GENOMIC DNA]</scope>
    <source>
        <strain>ATCC 35678 / DSM 2160 / CIP 103997 / JCM 8858 / NBRC 14720 / NCIMB 2260 / Gabara</strain>
    </source>
</reference>
<proteinExistence type="inferred from homology"/>
<sequence>MTVETGIVVGASVSHSHASIDQIETAADGSQQTAVEELLSKEGVSEAFVLQTCNRAEAYVVANDSETGTAALAGYLAGVDDDAIRMLSHNQSLKHLMAVACGLESLVIGEDQILGQVRDAYEDARGVGGVGPTLNDAVLKALHVGERARTETAINEGAVSLGSAAVRFAAERHGVTGSTALVVGAGEMATLAAKALDDPASRVIVANRTRERAERLAEELSTTASVVGVDSVDEAADAADVVVSATGSEDYVIDTADLGGVGETCVLDIAQPRDVAPGADGIDGVAVYDLDTIESVTDEARAKRREAAETVETMIDEEFEHLMTQYKRKRADQVIAAMYEGAERIKARELRTAVSKFEAEREDGLSEREHEIVESMADALVGQLLSAPTQSLRDAAEEDDWATINAALQLFGPGLEPEPTELPTVPDGPEGVPEELRERMSSGMLEQFSTNDD</sequence>
<dbReference type="EC" id="1.2.1.70" evidence="1"/>
<dbReference type="EMBL" id="CR936257">
    <property type="protein sequence ID" value="CAI50342.1"/>
    <property type="molecule type" value="Genomic_DNA"/>
</dbReference>
<dbReference type="RefSeq" id="WP_011323957.1">
    <property type="nucleotide sequence ID" value="NC_007426.1"/>
</dbReference>
<dbReference type="SMR" id="Q3ING1"/>
<dbReference type="STRING" id="348780.NP_4502A"/>
<dbReference type="EnsemblBacteria" id="CAI50342">
    <property type="protein sequence ID" value="CAI50342"/>
    <property type="gene ID" value="NP_4502A"/>
</dbReference>
<dbReference type="GeneID" id="3702804"/>
<dbReference type="KEGG" id="nph:NP_4502A"/>
<dbReference type="eggNOG" id="arCOG01036">
    <property type="taxonomic scope" value="Archaea"/>
</dbReference>
<dbReference type="HOGENOM" id="CLU_035113_0_1_2"/>
<dbReference type="OrthoDB" id="4562at2157"/>
<dbReference type="UniPathway" id="UPA00251">
    <property type="reaction ID" value="UER00316"/>
</dbReference>
<dbReference type="Proteomes" id="UP000002698">
    <property type="component" value="Chromosome"/>
</dbReference>
<dbReference type="GO" id="GO:0008883">
    <property type="term" value="F:glutamyl-tRNA reductase activity"/>
    <property type="evidence" value="ECO:0007669"/>
    <property type="project" value="UniProtKB-UniRule"/>
</dbReference>
<dbReference type="GO" id="GO:0050661">
    <property type="term" value="F:NADP binding"/>
    <property type="evidence" value="ECO:0007669"/>
    <property type="project" value="InterPro"/>
</dbReference>
<dbReference type="GO" id="GO:0019353">
    <property type="term" value="P:protoporphyrinogen IX biosynthetic process from glutamate"/>
    <property type="evidence" value="ECO:0007669"/>
    <property type="project" value="TreeGrafter"/>
</dbReference>
<dbReference type="CDD" id="cd05213">
    <property type="entry name" value="NAD_bind_Glutamyl_tRNA_reduct"/>
    <property type="match status" value="1"/>
</dbReference>
<dbReference type="FunFam" id="3.30.460.30:FF:000001">
    <property type="entry name" value="Glutamyl-tRNA reductase"/>
    <property type="match status" value="1"/>
</dbReference>
<dbReference type="Gene3D" id="3.30.460.30">
    <property type="entry name" value="Glutamyl-tRNA reductase, N-terminal domain"/>
    <property type="match status" value="1"/>
</dbReference>
<dbReference type="Gene3D" id="3.40.50.720">
    <property type="entry name" value="NAD(P)-binding Rossmann-like Domain"/>
    <property type="match status" value="1"/>
</dbReference>
<dbReference type="HAMAP" id="MF_00087">
    <property type="entry name" value="Glu_tRNA_reductase"/>
    <property type="match status" value="1"/>
</dbReference>
<dbReference type="InterPro" id="IPR000343">
    <property type="entry name" value="4pyrrol_synth_GluRdtase"/>
</dbReference>
<dbReference type="InterPro" id="IPR015896">
    <property type="entry name" value="4pyrrol_synth_GluRdtase_dimer"/>
</dbReference>
<dbReference type="InterPro" id="IPR015895">
    <property type="entry name" value="4pyrrol_synth_GluRdtase_N"/>
</dbReference>
<dbReference type="InterPro" id="IPR018214">
    <property type="entry name" value="GluRdtase_CS"/>
</dbReference>
<dbReference type="InterPro" id="IPR036453">
    <property type="entry name" value="GluRdtase_dimer_dom_sf"/>
</dbReference>
<dbReference type="InterPro" id="IPR036343">
    <property type="entry name" value="GluRdtase_N_sf"/>
</dbReference>
<dbReference type="InterPro" id="IPR036291">
    <property type="entry name" value="NAD(P)-bd_dom_sf"/>
</dbReference>
<dbReference type="InterPro" id="IPR006151">
    <property type="entry name" value="Shikm_DH/Glu-tRNA_Rdtase"/>
</dbReference>
<dbReference type="NCBIfam" id="TIGR01035">
    <property type="entry name" value="hemA"/>
    <property type="match status" value="1"/>
</dbReference>
<dbReference type="PANTHER" id="PTHR43013">
    <property type="entry name" value="GLUTAMYL-TRNA REDUCTASE"/>
    <property type="match status" value="1"/>
</dbReference>
<dbReference type="PANTHER" id="PTHR43013:SF1">
    <property type="entry name" value="GLUTAMYL-TRNA REDUCTASE"/>
    <property type="match status" value="1"/>
</dbReference>
<dbReference type="Pfam" id="PF00745">
    <property type="entry name" value="GlutR_dimer"/>
    <property type="match status" value="1"/>
</dbReference>
<dbReference type="Pfam" id="PF05201">
    <property type="entry name" value="GlutR_N"/>
    <property type="match status" value="1"/>
</dbReference>
<dbReference type="Pfam" id="PF01488">
    <property type="entry name" value="Shikimate_DH"/>
    <property type="match status" value="1"/>
</dbReference>
<dbReference type="PIRSF" id="PIRSF000445">
    <property type="entry name" value="4pyrrol_synth_GluRdtase"/>
    <property type="match status" value="1"/>
</dbReference>
<dbReference type="SUPFAM" id="SSF69742">
    <property type="entry name" value="Glutamyl tRNA-reductase catalytic, N-terminal domain"/>
    <property type="match status" value="1"/>
</dbReference>
<dbReference type="SUPFAM" id="SSF69075">
    <property type="entry name" value="Glutamyl tRNA-reductase dimerization domain"/>
    <property type="match status" value="1"/>
</dbReference>
<dbReference type="SUPFAM" id="SSF51735">
    <property type="entry name" value="NAD(P)-binding Rossmann-fold domains"/>
    <property type="match status" value="1"/>
</dbReference>
<dbReference type="PROSITE" id="PS00747">
    <property type="entry name" value="GLUTR"/>
    <property type="match status" value="1"/>
</dbReference>